<protein>
    <recommendedName>
        <fullName>Hippocalcin-like protein 4</fullName>
        <shortName>HLP4</shortName>
    </recommendedName>
</protein>
<sequence>MGKTNSKLAPEVLEDLVQNTEFSEQELKQWYKGFLKDCPSGILNLEEFQQLYIKFFPYGDASKFAQHAFRTFDKNGDGTIDFREFICALSVTSRGSFEQKLNWAFEMYDLDGDGRITRLEMLEIIEAIYKMVGTVIMMRMNQDGLTPQQRVDKIFKKMDQDKDDQITLEEFKEAAKSDPSIVLLLQCDMQK</sequence>
<evidence type="ECO:0000250" key="1"/>
<evidence type="ECO:0000255" key="2">
    <source>
        <dbReference type="PROSITE-ProRule" id="PRU00448"/>
    </source>
</evidence>
<evidence type="ECO:0000305" key="3"/>
<keyword id="KW-0106">Calcium</keyword>
<keyword id="KW-0449">Lipoprotein</keyword>
<keyword id="KW-0479">Metal-binding</keyword>
<keyword id="KW-0519">Myristate</keyword>
<keyword id="KW-1267">Proteomics identification</keyword>
<keyword id="KW-1185">Reference proteome</keyword>
<keyword id="KW-0677">Repeat</keyword>
<feature type="initiator methionine" description="Removed">
    <location>
        <position position="1"/>
    </location>
</feature>
<feature type="chain" id="PRO_0000073777" description="Hippocalcin-like protein 4">
    <location>
        <begin position="2"/>
        <end position="191"/>
    </location>
</feature>
<feature type="domain" description="EF-hand 1" evidence="3">
    <location>
        <begin position="24"/>
        <end position="59"/>
    </location>
</feature>
<feature type="domain" description="EF-hand 2" evidence="2">
    <location>
        <begin position="60"/>
        <end position="95"/>
    </location>
</feature>
<feature type="domain" description="EF-hand 3" evidence="2">
    <location>
        <begin position="96"/>
        <end position="131"/>
    </location>
</feature>
<feature type="domain" description="EF-hand 4" evidence="2">
    <location>
        <begin position="146"/>
        <end position="181"/>
    </location>
</feature>
<feature type="binding site" evidence="2">
    <location>
        <position position="73"/>
    </location>
    <ligand>
        <name>Ca(2+)</name>
        <dbReference type="ChEBI" id="CHEBI:29108"/>
        <label>1</label>
    </ligand>
</feature>
<feature type="binding site" evidence="2">
    <location>
        <position position="75"/>
    </location>
    <ligand>
        <name>Ca(2+)</name>
        <dbReference type="ChEBI" id="CHEBI:29108"/>
        <label>1</label>
    </ligand>
</feature>
<feature type="binding site" evidence="2">
    <location>
        <position position="77"/>
    </location>
    <ligand>
        <name>Ca(2+)</name>
        <dbReference type="ChEBI" id="CHEBI:29108"/>
        <label>1</label>
    </ligand>
</feature>
<feature type="binding site" evidence="2">
    <location>
        <position position="79"/>
    </location>
    <ligand>
        <name>Ca(2+)</name>
        <dbReference type="ChEBI" id="CHEBI:29108"/>
        <label>1</label>
    </ligand>
</feature>
<feature type="binding site" evidence="2">
    <location>
        <position position="84"/>
    </location>
    <ligand>
        <name>Ca(2+)</name>
        <dbReference type="ChEBI" id="CHEBI:29108"/>
        <label>1</label>
    </ligand>
</feature>
<feature type="binding site" evidence="2">
    <location>
        <position position="109"/>
    </location>
    <ligand>
        <name>Ca(2+)</name>
        <dbReference type="ChEBI" id="CHEBI:29108"/>
        <label>2</label>
    </ligand>
</feature>
<feature type="binding site" evidence="2">
    <location>
        <position position="111"/>
    </location>
    <ligand>
        <name>Ca(2+)</name>
        <dbReference type="ChEBI" id="CHEBI:29108"/>
        <label>2</label>
    </ligand>
</feature>
<feature type="binding site" evidence="2">
    <location>
        <position position="113"/>
    </location>
    <ligand>
        <name>Ca(2+)</name>
        <dbReference type="ChEBI" id="CHEBI:29108"/>
        <label>2</label>
    </ligand>
</feature>
<feature type="binding site" evidence="2">
    <location>
        <position position="115"/>
    </location>
    <ligand>
        <name>Ca(2+)</name>
        <dbReference type="ChEBI" id="CHEBI:29108"/>
        <label>2</label>
    </ligand>
</feature>
<feature type="binding site" evidence="2">
    <location>
        <position position="120"/>
    </location>
    <ligand>
        <name>Ca(2+)</name>
        <dbReference type="ChEBI" id="CHEBI:29108"/>
        <label>2</label>
    </ligand>
</feature>
<feature type="binding site" evidence="2">
    <location>
        <position position="159"/>
    </location>
    <ligand>
        <name>Ca(2+)</name>
        <dbReference type="ChEBI" id="CHEBI:29108"/>
        <label>3</label>
    </ligand>
</feature>
<feature type="binding site" evidence="2">
    <location>
        <position position="161"/>
    </location>
    <ligand>
        <name>Ca(2+)</name>
        <dbReference type="ChEBI" id="CHEBI:29108"/>
        <label>3</label>
    </ligand>
</feature>
<feature type="binding site" evidence="2">
    <location>
        <position position="163"/>
    </location>
    <ligand>
        <name>Ca(2+)</name>
        <dbReference type="ChEBI" id="CHEBI:29108"/>
        <label>3</label>
    </ligand>
</feature>
<feature type="binding site" evidence="2">
    <location>
        <position position="165"/>
    </location>
    <ligand>
        <name>Ca(2+)</name>
        <dbReference type="ChEBI" id="CHEBI:29108"/>
        <label>3</label>
    </ligand>
</feature>
<feature type="binding site" evidence="2">
    <location>
        <position position="170"/>
    </location>
    <ligand>
        <name>Ca(2+)</name>
        <dbReference type="ChEBI" id="CHEBI:29108"/>
        <label>3</label>
    </ligand>
</feature>
<feature type="lipid moiety-binding region" description="N-myristoyl glycine" evidence="1">
    <location>
        <position position="2"/>
    </location>
</feature>
<feature type="sequence conflict" description="In Ref. 6; AAH30827." evidence="3" ref="6">
    <original>P</original>
    <variation>A</variation>
    <location>
        <position position="179"/>
    </location>
</feature>
<dbReference type="EMBL" id="AB001105">
    <property type="protein sequence ID" value="BAA86892.1"/>
    <property type="molecule type" value="mRNA"/>
</dbReference>
<dbReference type="EMBL" id="AL136591">
    <property type="protein sequence ID" value="CAB66526.1"/>
    <property type="molecule type" value="mRNA"/>
</dbReference>
<dbReference type="EMBL" id="AK312314">
    <property type="protein sequence ID" value="BAG35239.1"/>
    <property type="molecule type" value="mRNA"/>
</dbReference>
<dbReference type="EMBL" id="AL035404">
    <property type="status" value="NOT_ANNOTATED_CDS"/>
    <property type="molecule type" value="Genomic_DNA"/>
</dbReference>
<dbReference type="EMBL" id="CH471059">
    <property type="protein sequence ID" value="EAX07257.1"/>
    <property type="molecule type" value="Genomic_DNA"/>
</dbReference>
<dbReference type="EMBL" id="CH471059">
    <property type="protein sequence ID" value="EAX07258.1"/>
    <property type="molecule type" value="Genomic_DNA"/>
</dbReference>
<dbReference type="EMBL" id="BC030827">
    <property type="protein sequence ID" value="AAH30827.1"/>
    <property type="molecule type" value="mRNA"/>
</dbReference>
<dbReference type="CCDS" id="CCDS441.1"/>
<dbReference type="RefSeq" id="NP_001269325.1">
    <property type="nucleotide sequence ID" value="NM_001282396.2"/>
</dbReference>
<dbReference type="RefSeq" id="NP_057341.1">
    <property type="nucleotide sequence ID" value="NM_016257.4"/>
</dbReference>
<dbReference type="RefSeq" id="XP_016856936.1">
    <property type="nucleotide sequence ID" value="XM_017001447.1"/>
</dbReference>
<dbReference type="SMR" id="Q9UM19"/>
<dbReference type="BioGRID" id="119542">
    <property type="interactions" value="28"/>
</dbReference>
<dbReference type="FunCoup" id="Q9UM19">
    <property type="interactions" value="245"/>
</dbReference>
<dbReference type="IntAct" id="Q9UM19">
    <property type="interactions" value="28"/>
</dbReference>
<dbReference type="MINT" id="Q9UM19"/>
<dbReference type="STRING" id="9606.ENSP00000481834"/>
<dbReference type="iPTMnet" id="Q9UM19"/>
<dbReference type="PhosphoSitePlus" id="Q9UM19"/>
<dbReference type="BioMuta" id="HPCAL4"/>
<dbReference type="DMDM" id="51316542"/>
<dbReference type="jPOST" id="Q9UM19"/>
<dbReference type="MassIVE" id="Q9UM19"/>
<dbReference type="PaxDb" id="9606-ENSP00000361935"/>
<dbReference type="PeptideAtlas" id="Q9UM19"/>
<dbReference type="ProteomicsDB" id="85171"/>
<dbReference type="Pumba" id="Q9UM19"/>
<dbReference type="Antibodypedia" id="31935">
    <property type="antibodies" value="159 antibodies from 21 providers"/>
</dbReference>
<dbReference type="DNASU" id="51440"/>
<dbReference type="Ensembl" id="ENST00000372844.8">
    <property type="protein sequence ID" value="ENSP00000361935.3"/>
    <property type="gene ID" value="ENSG00000116983.13"/>
</dbReference>
<dbReference type="Ensembl" id="ENST00000617690.2">
    <property type="protein sequence ID" value="ENSP00000481834.1"/>
    <property type="gene ID" value="ENSG00000116983.13"/>
</dbReference>
<dbReference type="GeneID" id="51440"/>
<dbReference type="KEGG" id="hsa:51440"/>
<dbReference type="MANE-Select" id="ENST00000372844.8">
    <property type="protein sequence ID" value="ENSP00000361935.3"/>
    <property type="RefSeq nucleotide sequence ID" value="NM_016257.4"/>
    <property type="RefSeq protein sequence ID" value="NP_057341.1"/>
</dbReference>
<dbReference type="UCSC" id="uc001cdr.5">
    <property type="organism name" value="human"/>
</dbReference>
<dbReference type="AGR" id="HGNC:18212"/>
<dbReference type="CTD" id="51440"/>
<dbReference type="DisGeNET" id="51440"/>
<dbReference type="GeneCards" id="HPCAL4"/>
<dbReference type="HGNC" id="HGNC:18212">
    <property type="gene designation" value="HPCAL4"/>
</dbReference>
<dbReference type="HPA" id="ENSG00000116983">
    <property type="expression patterns" value="Tissue enriched (brain)"/>
</dbReference>
<dbReference type="MIM" id="619211">
    <property type="type" value="gene"/>
</dbReference>
<dbReference type="neXtProt" id="NX_Q9UM19"/>
<dbReference type="OpenTargets" id="ENSG00000116983"/>
<dbReference type="PharmGKB" id="PA134924885"/>
<dbReference type="VEuPathDB" id="HostDB:ENSG00000116983"/>
<dbReference type="eggNOG" id="KOG0044">
    <property type="taxonomic scope" value="Eukaryota"/>
</dbReference>
<dbReference type="GeneTree" id="ENSGT00940000161166"/>
<dbReference type="HOGENOM" id="CLU_072366_1_0_1"/>
<dbReference type="InParanoid" id="Q9UM19"/>
<dbReference type="OMA" id="QQLYIKX"/>
<dbReference type="OrthoDB" id="191686at2759"/>
<dbReference type="PAN-GO" id="Q9UM19">
    <property type="GO annotations" value="1 GO annotation based on evolutionary models"/>
</dbReference>
<dbReference type="PhylomeDB" id="Q9UM19"/>
<dbReference type="TreeFam" id="TF300009"/>
<dbReference type="PathwayCommons" id="Q9UM19"/>
<dbReference type="SignaLink" id="Q9UM19"/>
<dbReference type="BioGRID-ORCS" id="51440">
    <property type="hits" value="13 hits in 1148 CRISPR screens"/>
</dbReference>
<dbReference type="ChiTaRS" id="HPCAL4">
    <property type="organism name" value="human"/>
</dbReference>
<dbReference type="GeneWiki" id="HPCAL4"/>
<dbReference type="GenomeRNAi" id="51440"/>
<dbReference type="Pharos" id="Q9UM19">
    <property type="development level" value="Tdark"/>
</dbReference>
<dbReference type="PRO" id="PR:Q9UM19"/>
<dbReference type="Proteomes" id="UP000005640">
    <property type="component" value="Chromosome 1"/>
</dbReference>
<dbReference type="RNAct" id="Q9UM19">
    <property type="molecule type" value="protein"/>
</dbReference>
<dbReference type="Bgee" id="ENSG00000116983">
    <property type="expression patterns" value="Expressed in right frontal lobe and 130 other cell types or tissues"/>
</dbReference>
<dbReference type="ExpressionAtlas" id="Q9UM19">
    <property type="expression patterns" value="baseline and differential"/>
</dbReference>
<dbReference type="GO" id="GO:0005246">
    <property type="term" value="F:calcium channel regulator activity"/>
    <property type="evidence" value="ECO:0007669"/>
    <property type="project" value="Ensembl"/>
</dbReference>
<dbReference type="GO" id="GO:0005509">
    <property type="term" value="F:calcium ion binding"/>
    <property type="evidence" value="ECO:0000318"/>
    <property type="project" value="GO_Central"/>
</dbReference>
<dbReference type="GO" id="GO:0019904">
    <property type="term" value="F:protein domain specific binding"/>
    <property type="evidence" value="ECO:0007669"/>
    <property type="project" value="Ensembl"/>
</dbReference>
<dbReference type="GO" id="GO:0007417">
    <property type="term" value="P:central nervous system development"/>
    <property type="evidence" value="ECO:0000304"/>
    <property type="project" value="ProtInc"/>
</dbReference>
<dbReference type="GO" id="GO:0009966">
    <property type="term" value="P:regulation of signal transduction"/>
    <property type="evidence" value="ECO:0000318"/>
    <property type="project" value="GO_Central"/>
</dbReference>
<dbReference type="GO" id="GO:0009408">
    <property type="term" value="P:response to heat"/>
    <property type="evidence" value="ECO:0007669"/>
    <property type="project" value="Ensembl"/>
</dbReference>
<dbReference type="CDD" id="cd00051">
    <property type="entry name" value="EFh"/>
    <property type="match status" value="2"/>
</dbReference>
<dbReference type="FunFam" id="1.10.238.10:FF:000009">
    <property type="entry name" value="Visinin-like protein 1"/>
    <property type="match status" value="1"/>
</dbReference>
<dbReference type="Gene3D" id="1.10.238.10">
    <property type="entry name" value="EF-hand"/>
    <property type="match status" value="1"/>
</dbReference>
<dbReference type="InterPro" id="IPR011992">
    <property type="entry name" value="EF-hand-dom_pair"/>
</dbReference>
<dbReference type="InterPro" id="IPR018247">
    <property type="entry name" value="EF_Hand_1_Ca_BS"/>
</dbReference>
<dbReference type="InterPro" id="IPR002048">
    <property type="entry name" value="EF_hand_dom"/>
</dbReference>
<dbReference type="InterPro" id="IPR028846">
    <property type="entry name" value="Recoverin"/>
</dbReference>
<dbReference type="PANTHER" id="PTHR23055">
    <property type="entry name" value="CALCIUM BINDING PROTEINS"/>
    <property type="match status" value="1"/>
</dbReference>
<dbReference type="PANTHER" id="PTHR23055:SF84">
    <property type="entry name" value="HIPPOCALCIN-LIKE PROTEIN 4"/>
    <property type="match status" value="1"/>
</dbReference>
<dbReference type="Pfam" id="PF00036">
    <property type="entry name" value="EF-hand_1"/>
    <property type="match status" value="1"/>
</dbReference>
<dbReference type="Pfam" id="PF13499">
    <property type="entry name" value="EF-hand_7"/>
    <property type="match status" value="1"/>
</dbReference>
<dbReference type="PRINTS" id="PR00450">
    <property type="entry name" value="RECOVERIN"/>
</dbReference>
<dbReference type="SMART" id="SM00054">
    <property type="entry name" value="EFh"/>
    <property type="match status" value="3"/>
</dbReference>
<dbReference type="SUPFAM" id="SSF47473">
    <property type="entry name" value="EF-hand"/>
    <property type="match status" value="1"/>
</dbReference>
<dbReference type="PROSITE" id="PS00018">
    <property type="entry name" value="EF_HAND_1"/>
    <property type="match status" value="3"/>
</dbReference>
<dbReference type="PROSITE" id="PS50222">
    <property type="entry name" value="EF_HAND_2"/>
    <property type="match status" value="3"/>
</dbReference>
<name>HPCL4_HUMAN</name>
<gene>
    <name type="primary">HPCAL4</name>
</gene>
<organism>
    <name type="scientific">Homo sapiens</name>
    <name type="common">Human</name>
    <dbReference type="NCBI Taxonomy" id="9606"/>
    <lineage>
        <taxon>Eukaryota</taxon>
        <taxon>Metazoa</taxon>
        <taxon>Chordata</taxon>
        <taxon>Craniata</taxon>
        <taxon>Vertebrata</taxon>
        <taxon>Euteleostomi</taxon>
        <taxon>Mammalia</taxon>
        <taxon>Eutheria</taxon>
        <taxon>Euarchontoglires</taxon>
        <taxon>Primates</taxon>
        <taxon>Haplorrhini</taxon>
        <taxon>Catarrhini</taxon>
        <taxon>Hominidae</taxon>
        <taxon>Homo</taxon>
    </lineage>
</organism>
<reference key="1">
    <citation type="journal article" date="1998" name="DNA Seq.">
        <title>Isolation of two human cDNAs, HLP3 and HLP4, homologous to the neuron-specific calcium-binding protein genes.</title>
        <authorList>
            <person name="Kobayashi M."/>
            <person name="Sakai E."/>
            <person name="Furuta Y."/>
            <person name="Takamatsu K."/>
        </authorList>
    </citation>
    <scope>NUCLEOTIDE SEQUENCE [MRNA]</scope>
    <source>
        <tissue>Brain</tissue>
    </source>
</reference>
<reference key="2">
    <citation type="journal article" date="2001" name="Genome Res.">
        <title>Towards a catalog of human genes and proteins: sequencing and analysis of 500 novel complete protein coding human cDNAs.</title>
        <authorList>
            <person name="Wiemann S."/>
            <person name="Weil B."/>
            <person name="Wellenreuther R."/>
            <person name="Gassenhuber J."/>
            <person name="Glassl S."/>
            <person name="Ansorge W."/>
            <person name="Boecher M."/>
            <person name="Bloecker H."/>
            <person name="Bauersachs S."/>
            <person name="Blum H."/>
            <person name="Lauber J."/>
            <person name="Duesterhoeft A."/>
            <person name="Beyer A."/>
            <person name="Koehrer K."/>
            <person name="Strack N."/>
            <person name="Mewes H.-W."/>
            <person name="Ottenwaelder B."/>
            <person name="Obermaier B."/>
            <person name="Tampe J."/>
            <person name="Heubner D."/>
            <person name="Wambutt R."/>
            <person name="Korn B."/>
            <person name="Klein M."/>
            <person name="Poustka A."/>
        </authorList>
    </citation>
    <scope>NUCLEOTIDE SEQUENCE [LARGE SCALE MRNA]</scope>
    <source>
        <tissue>Amygdala</tissue>
    </source>
</reference>
<reference key="3">
    <citation type="journal article" date="2004" name="Nat. Genet.">
        <title>Complete sequencing and characterization of 21,243 full-length human cDNAs.</title>
        <authorList>
            <person name="Ota T."/>
            <person name="Suzuki Y."/>
            <person name="Nishikawa T."/>
            <person name="Otsuki T."/>
            <person name="Sugiyama T."/>
            <person name="Irie R."/>
            <person name="Wakamatsu A."/>
            <person name="Hayashi K."/>
            <person name="Sato H."/>
            <person name="Nagai K."/>
            <person name="Kimura K."/>
            <person name="Makita H."/>
            <person name="Sekine M."/>
            <person name="Obayashi M."/>
            <person name="Nishi T."/>
            <person name="Shibahara T."/>
            <person name="Tanaka T."/>
            <person name="Ishii S."/>
            <person name="Yamamoto J."/>
            <person name="Saito K."/>
            <person name="Kawai Y."/>
            <person name="Isono Y."/>
            <person name="Nakamura Y."/>
            <person name="Nagahari K."/>
            <person name="Murakami K."/>
            <person name="Yasuda T."/>
            <person name="Iwayanagi T."/>
            <person name="Wagatsuma M."/>
            <person name="Shiratori A."/>
            <person name="Sudo H."/>
            <person name="Hosoiri T."/>
            <person name="Kaku Y."/>
            <person name="Kodaira H."/>
            <person name="Kondo H."/>
            <person name="Sugawara M."/>
            <person name="Takahashi M."/>
            <person name="Kanda K."/>
            <person name="Yokoi T."/>
            <person name="Furuya T."/>
            <person name="Kikkawa E."/>
            <person name="Omura Y."/>
            <person name="Abe K."/>
            <person name="Kamihara K."/>
            <person name="Katsuta N."/>
            <person name="Sato K."/>
            <person name="Tanikawa M."/>
            <person name="Yamazaki M."/>
            <person name="Ninomiya K."/>
            <person name="Ishibashi T."/>
            <person name="Yamashita H."/>
            <person name="Murakawa K."/>
            <person name="Fujimori K."/>
            <person name="Tanai H."/>
            <person name="Kimata M."/>
            <person name="Watanabe M."/>
            <person name="Hiraoka S."/>
            <person name="Chiba Y."/>
            <person name="Ishida S."/>
            <person name="Ono Y."/>
            <person name="Takiguchi S."/>
            <person name="Watanabe S."/>
            <person name="Yosida M."/>
            <person name="Hotuta T."/>
            <person name="Kusano J."/>
            <person name="Kanehori K."/>
            <person name="Takahashi-Fujii A."/>
            <person name="Hara H."/>
            <person name="Tanase T.-O."/>
            <person name="Nomura Y."/>
            <person name="Togiya S."/>
            <person name="Komai F."/>
            <person name="Hara R."/>
            <person name="Takeuchi K."/>
            <person name="Arita M."/>
            <person name="Imose N."/>
            <person name="Musashino K."/>
            <person name="Yuuki H."/>
            <person name="Oshima A."/>
            <person name="Sasaki N."/>
            <person name="Aotsuka S."/>
            <person name="Yoshikawa Y."/>
            <person name="Matsunawa H."/>
            <person name="Ichihara T."/>
            <person name="Shiohata N."/>
            <person name="Sano S."/>
            <person name="Moriya S."/>
            <person name="Momiyama H."/>
            <person name="Satoh N."/>
            <person name="Takami S."/>
            <person name="Terashima Y."/>
            <person name="Suzuki O."/>
            <person name="Nakagawa S."/>
            <person name="Senoh A."/>
            <person name="Mizoguchi H."/>
            <person name="Goto Y."/>
            <person name="Shimizu F."/>
            <person name="Wakebe H."/>
            <person name="Hishigaki H."/>
            <person name="Watanabe T."/>
            <person name="Sugiyama A."/>
            <person name="Takemoto M."/>
            <person name="Kawakami B."/>
            <person name="Yamazaki M."/>
            <person name="Watanabe K."/>
            <person name="Kumagai A."/>
            <person name="Itakura S."/>
            <person name="Fukuzumi Y."/>
            <person name="Fujimori Y."/>
            <person name="Komiyama M."/>
            <person name="Tashiro H."/>
            <person name="Tanigami A."/>
            <person name="Fujiwara T."/>
            <person name="Ono T."/>
            <person name="Yamada K."/>
            <person name="Fujii Y."/>
            <person name="Ozaki K."/>
            <person name="Hirao M."/>
            <person name="Ohmori Y."/>
            <person name="Kawabata A."/>
            <person name="Hikiji T."/>
            <person name="Kobatake N."/>
            <person name="Inagaki H."/>
            <person name="Ikema Y."/>
            <person name="Okamoto S."/>
            <person name="Okitani R."/>
            <person name="Kawakami T."/>
            <person name="Noguchi S."/>
            <person name="Itoh T."/>
            <person name="Shigeta K."/>
            <person name="Senba T."/>
            <person name="Matsumura K."/>
            <person name="Nakajima Y."/>
            <person name="Mizuno T."/>
            <person name="Morinaga M."/>
            <person name="Sasaki M."/>
            <person name="Togashi T."/>
            <person name="Oyama M."/>
            <person name="Hata H."/>
            <person name="Watanabe M."/>
            <person name="Komatsu T."/>
            <person name="Mizushima-Sugano J."/>
            <person name="Satoh T."/>
            <person name="Shirai Y."/>
            <person name="Takahashi Y."/>
            <person name="Nakagawa K."/>
            <person name="Okumura K."/>
            <person name="Nagase T."/>
            <person name="Nomura N."/>
            <person name="Kikuchi H."/>
            <person name="Masuho Y."/>
            <person name="Yamashita R."/>
            <person name="Nakai K."/>
            <person name="Yada T."/>
            <person name="Nakamura Y."/>
            <person name="Ohara O."/>
            <person name="Isogai T."/>
            <person name="Sugano S."/>
        </authorList>
    </citation>
    <scope>NUCLEOTIDE SEQUENCE [LARGE SCALE MRNA]</scope>
    <source>
        <tissue>Cerebellum</tissue>
    </source>
</reference>
<reference key="4">
    <citation type="journal article" date="2006" name="Nature">
        <title>The DNA sequence and biological annotation of human chromosome 1.</title>
        <authorList>
            <person name="Gregory S.G."/>
            <person name="Barlow K.F."/>
            <person name="McLay K.E."/>
            <person name="Kaul R."/>
            <person name="Swarbreck D."/>
            <person name="Dunham A."/>
            <person name="Scott C.E."/>
            <person name="Howe K.L."/>
            <person name="Woodfine K."/>
            <person name="Spencer C.C.A."/>
            <person name="Jones M.C."/>
            <person name="Gillson C."/>
            <person name="Searle S."/>
            <person name="Zhou Y."/>
            <person name="Kokocinski F."/>
            <person name="McDonald L."/>
            <person name="Evans R."/>
            <person name="Phillips K."/>
            <person name="Atkinson A."/>
            <person name="Cooper R."/>
            <person name="Jones C."/>
            <person name="Hall R.E."/>
            <person name="Andrews T.D."/>
            <person name="Lloyd C."/>
            <person name="Ainscough R."/>
            <person name="Almeida J.P."/>
            <person name="Ambrose K.D."/>
            <person name="Anderson F."/>
            <person name="Andrew R.W."/>
            <person name="Ashwell R.I.S."/>
            <person name="Aubin K."/>
            <person name="Babbage A.K."/>
            <person name="Bagguley C.L."/>
            <person name="Bailey J."/>
            <person name="Beasley H."/>
            <person name="Bethel G."/>
            <person name="Bird C.P."/>
            <person name="Bray-Allen S."/>
            <person name="Brown J.Y."/>
            <person name="Brown A.J."/>
            <person name="Buckley D."/>
            <person name="Burton J."/>
            <person name="Bye J."/>
            <person name="Carder C."/>
            <person name="Chapman J.C."/>
            <person name="Clark S.Y."/>
            <person name="Clarke G."/>
            <person name="Clee C."/>
            <person name="Cobley V."/>
            <person name="Collier R.E."/>
            <person name="Corby N."/>
            <person name="Coville G.J."/>
            <person name="Davies J."/>
            <person name="Deadman R."/>
            <person name="Dunn M."/>
            <person name="Earthrowl M."/>
            <person name="Ellington A.G."/>
            <person name="Errington H."/>
            <person name="Frankish A."/>
            <person name="Frankland J."/>
            <person name="French L."/>
            <person name="Garner P."/>
            <person name="Garnett J."/>
            <person name="Gay L."/>
            <person name="Ghori M.R.J."/>
            <person name="Gibson R."/>
            <person name="Gilby L.M."/>
            <person name="Gillett W."/>
            <person name="Glithero R.J."/>
            <person name="Grafham D.V."/>
            <person name="Griffiths C."/>
            <person name="Griffiths-Jones S."/>
            <person name="Grocock R."/>
            <person name="Hammond S."/>
            <person name="Harrison E.S.I."/>
            <person name="Hart E."/>
            <person name="Haugen E."/>
            <person name="Heath P.D."/>
            <person name="Holmes S."/>
            <person name="Holt K."/>
            <person name="Howden P.J."/>
            <person name="Hunt A.R."/>
            <person name="Hunt S.E."/>
            <person name="Hunter G."/>
            <person name="Isherwood J."/>
            <person name="James R."/>
            <person name="Johnson C."/>
            <person name="Johnson D."/>
            <person name="Joy A."/>
            <person name="Kay M."/>
            <person name="Kershaw J.K."/>
            <person name="Kibukawa M."/>
            <person name="Kimberley A.M."/>
            <person name="King A."/>
            <person name="Knights A.J."/>
            <person name="Lad H."/>
            <person name="Laird G."/>
            <person name="Lawlor S."/>
            <person name="Leongamornlert D.A."/>
            <person name="Lloyd D.M."/>
            <person name="Loveland J."/>
            <person name="Lovell J."/>
            <person name="Lush M.J."/>
            <person name="Lyne R."/>
            <person name="Martin S."/>
            <person name="Mashreghi-Mohammadi M."/>
            <person name="Matthews L."/>
            <person name="Matthews N.S.W."/>
            <person name="McLaren S."/>
            <person name="Milne S."/>
            <person name="Mistry S."/>
            <person name="Moore M.J.F."/>
            <person name="Nickerson T."/>
            <person name="O'Dell C.N."/>
            <person name="Oliver K."/>
            <person name="Palmeiri A."/>
            <person name="Palmer S.A."/>
            <person name="Parker A."/>
            <person name="Patel D."/>
            <person name="Pearce A.V."/>
            <person name="Peck A.I."/>
            <person name="Pelan S."/>
            <person name="Phelps K."/>
            <person name="Phillimore B.J."/>
            <person name="Plumb R."/>
            <person name="Rajan J."/>
            <person name="Raymond C."/>
            <person name="Rouse G."/>
            <person name="Saenphimmachak C."/>
            <person name="Sehra H.K."/>
            <person name="Sheridan E."/>
            <person name="Shownkeen R."/>
            <person name="Sims S."/>
            <person name="Skuce C.D."/>
            <person name="Smith M."/>
            <person name="Steward C."/>
            <person name="Subramanian S."/>
            <person name="Sycamore N."/>
            <person name="Tracey A."/>
            <person name="Tromans A."/>
            <person name="Van Helmond Z."/>
            <person name="Wall M."/>
            <person name="Wallis J.M."/>
            <person name="White S."/>
            <person name="Whitehead S.L."/>
            <person name="Wilkinson J.E."/>
            <person name="Willey D.L."/>
            <person name="Williams H."/>
            <person name="Wilming L."/>
            <person name="Wray P.W."/>
            <person name="Wu Z."/>
            <person name="Coulson A."/>
            <person name="Vaudin M."/>
            <person name="Sulston J.E."/>
            <person name="Durbin R.M."/>
            <person name="Hubbard T."/>
            <person name="Wooster R."/>
            <person name="Dunham I."/>
            <person name="Carter N.P."/>
            <person name="McVean G."/>
            <person name="Ross M.T."/>
            <person name="Harrow J."/>
            <person name="Olson M.V."/>
            <person name="Beck S."/>
            <person name="Rogers J."/>
            <person name="Bentley D.R."/>
        </authorList>
    </citation>
    <scope>NUCLEOTIDE SEQUENCE [LARGE SCALE GENOMIC DNA]</scope>
</reference>
<reference key="5">
    <citation type="submission" date="2005-09" db="EMBL/GenBank/DDBJ databases">
        <authorList>
            <person name="Mural R.J."/>
            <person name="Istrail S."/>
            <person name="Sutton G.G."/>
            <person name="Florea L."/>
            <person name="Halpern A.L."/>
            <person name="Mobarry C.M."/>
            <person name="Lippert R."/>
            <person name="Walenz B."/>
            <person name="Shatkay H."/>
            <person name="Dew I."/>
            <person name="Miller J.R."/>
            <person name="Flanigan M.J."/>
            <person name="Edwards N.J."/>
            <person name="Bolanos R."/>
            <person name="Fasulo D."/>
            <person name="Halldorsson B.V."/>
            <person name="Hannenhalli S."/>
            <person name="Turner R."/>
            <person name="Yooseph S."/>
            <person name="Lu F."/>
            <person name="Nusskern D.R."/>
            <person name="Shue B.C."/>
            <person name="Zheng X.H."/>
            <person name="Zhong F."/>
            <person name="Delcher A.L."/>
            <person name="Huson D.H."/>
            <person name="Kravitz S.A."/>
            <person name="Mouchard L."/>
            <person name="Reinert K."/>
            <person name="Remington K.A."/>
            <person name="Clark A.G."/>
            <person name="Waterman M.S."/>
            <person name="Eichler E.E."/>
            <person name="Adams M.D."/>
            <person name="Hunkapiller M.W."/>
            <person name="Myers E.W."/>
            <person name="Venter J.C."/>
        </authorList>
    </citation>
    <scope>NUCLEOTIDE SEQUENCE [LARGE SCALE GENOMIC DNA]</scope>
</reference>
<reference key="6">
    <citation type="journal article" date="2004" name="Genome Res.">
        <title>The status, quality, and expansion of the NIH full-length cDNA project: the Mammalian Gene Collection (MGC).</title>
        <authorList>
            <consortium name="The MGC Project Team"/>
        </authorList>
    </citation>
    <scope>NUCLEOTIDE SEQUENCE [LARGE SCALE MRNA]</scope>
    <source>
        <tissue>Brain</tissue>
    </source>
</reference>
<proteinExistence type="evidence at protein level"/>
<comment type="function">
    <text evidence="1">May be involved in the calcium-dependent regulation of rhodopsin phosphorylation.</text>
</comment>
<comment type="interaction">
    <interactant intactId="EBI-744820">
        <id>Q9UM19</id>
    </interactant>
    <interactant intactId="EBI-16746154">
        <id>Q7Z3H0-1</id>
        <label>ANKRD33</label>
    </interactant>
    <organismsDiffer>false</organismsDiffer>
    <experiments>3</experiments>
</comment>
<comment type="interaction">
    <interactant intactId="EBI-744820">
        <id>Q9UM19</id>
    </interactant>
    <interactant intactId="EBI-10104898">
        <id>P55087</id>
        <label>AQP4</label>
    </interactant>
    <organismsDiffer>false</organismsDiffer>
    <experiments>3</experiments>
</comment>
<comment type="interaction">
    <interactant intactId="EBI-744820">
        <id>Q9UM19</id>
    </interactant>
    <interactant intactId="EBI-4314501">
        <id>P40199</id>
        <label>CEACAM6</label>
    </interactant>
    <organismsDiffer>false</organismsDiffer>
    <experiments>3</experiments>
</comment>
<comment type="interaction">
    <interactant intactId="EBI-744820">
        <id>Q9UM19</id>
    </interactant>
    <interactant intactId="EBI-740376">
        <id>Q86UW9</id>
        <label>DTX2</label>
    </interactant>
    <organismsDiffer>false</organismsDiffer>
    <experiments>7</experiments>
</comment>
<comment type="interaction">
    <interactant intactId="EBI-744820">
        <id>Q9UM19</id>
    </interactant>
    <interactant intactId="EBI-1040727">
        <id>P13726</id>
        <label>F3</label>
    </interactant>
    <organismsDiffer>false</organismsDiffer>
    <experiments>3</experiments>
</comment>
<comment type="interaction">
    <interactant intactId="EBI-744820">
        <id>Q9UM19</id>
    </interactant>
    <interactant intactId="EBI-741921">
        <id>Q96AQ9</id>
        <label>FAM131C</label>
    </interactant>
    <organismsDiffer>false</organismsDiffer>
    <experiments>6</experiments>
</comment>
<comment type="interaction">
    <interactant intactId="EBI-744820">
        <id>Q9UM19</id>
    </interactant>
    <interactant intactId="EBI-725647">
        <id>Q99732</id>
        <label>LITAF</label>
    </interactant>
    <organismsDiffer>false</organismsDiffer>
    <experiments>7</experiments>
</comment>
<comment type="interaction">
    <interactant intactId="EBI-744820">
        <id>Q9UM19</id>
    </interactant>
    <interactant intactId="EBI-19157918">
        <id>Q9UJ68</id>
        <label>MSRA</label>
    </interactant>
    <organismsDiffer>false</organismsDiffer>
    <experiments>3</experiments>
</comment>
<comment type="interaction">
    <interactant intactId="EBI-744820">
        <id>Q9UM19</id>
    </interactant>
    <interactant intactId="EBI-713793">
        <id>Q96GD3</id>
        <label>SCMH1</label>
    </interactant>
    <organismsDiffer>false</organismsDiffer>
    <experiments>3</experiments>
</comment>
<comment type="interaction">
    <interactant intactId="EBI-744820">
        <id>Q9UM19</id>
    </interactant>
    <interactant intactId="EBI-5235340">
        <id>Q7Z699</id>
        <label>SPRED1</label>
    </interactant>
    <organismsDiffer>false</organismsDiffer>
    <experiments>6</experiments>
</comment>
<comment type="interaction">
    <interactant intactId="EBI-744820">
        <id>Q9UM19</id>
    </interactant>
    <interactant intactId="EBI-12007066">
        <id>Q9BXU2</id>
        <label>TEX13B</label>
    </interactant>
    <organismsDiffer>false</organismsDiffer>
    <experiments>3</experiments>
</comment>
<comment type="interaction">
    <interactant intactId="EBI-744820">
        <id>Q9UM19</id>
    </interactant>
    <interactant intactId="EBI-18161658">
        <id>Q9NZQ8</id>
        <label>TRPM5</label>
    </interactant>
    <organismsDiffer>false</organismsDiffer>
    <experiments>3</experiments>
</comment>
<comment type="interaction">
    <interactant intactId="EBI-744820">
        <id>Q9UM19</id>
    </interactant>
    <interactant intactId="EBI-10274410">
        <id>Q9H892-2</id>
        <label>TTC12</label>
    </interactant>
    <organismsDiffer>false</organismsDiffer>
    <experiments>3</experiments>
</comment>
<comment type="interaction">
    <interactant intactId="EBI-744820">
        <id>Q9UM19</id>
    </interactant>
    <interactant intactId="EBI-17234977">
        <id>A0A1U9X8X8</id>
    </interactant>
    <organismsDiffer>false</organismsDiffer>
    <experiments>3</experiments>
</comment>
<comment type="interaction">
    <interactant intactId="EBI-744820">
        <id>Q9UM19</id>
    </interactant>
    <interactant intactId="EBI-6480811">
        <id>Q7DB77</id>
        <label>tir</label>
    </interactant>
    <organismsDiffer>true</organismsDiffer>
    <experiments>3</experiments>
</comment>
<comment type="miscellaneous">
    <text evidence="1">Probably binds two or three calcium ions.</text>
</comment>
<comment type="similarity">
    <text evidence="3">Belongs to the recoverin family.</text>
</comment>
<accession>Q9UM19</accession>
<accession>B2R5U2</accession>
<accession>D3DPU1</accession>
<accession>Q5TG97</accession>
<accession>Q8N611</accession>